<organism>
    <name type="scientific">Streptococcus uberis (strain ATCC BAA-854 / 0140J)</name>
    <dbReference type="NCBI Taxonomy" id="218495"/>
    <lineage>
        <taxon>Bacteria</taxon>
        <taxon>Bacillati</taxon>
        <taxon>Bacillota</taxon>
        <taxon>Bacilli</taxon>
        <taxon>Lactobacillales</taxon>
        <taxon>Streptococcaceae</taxon>
        <taxon>Streptococcus</taxon>
    </lineage>
</organism>
<protein>
    <recommendedName>
        <fullName evidence="1">Peptide chain release factor 3</fullName>
        <shortName evidence="1">RF-3</shortName>
    </recommendedName>
</protein>
<accession>B9DUR6</accession>
<feature type="chain" id="PRO_1000193541" description="Peptide chain release factor 3">
    <location>
        <begin position="1"/>
        <end position="514"/>
    </location>
</feature>
<feature type="domain" description="tr-type G">
    <location>
        <begin position="8"/>
        <end position="268"/>
    </location>
</feature>
<feature type="binding site" evidence="1">
    <location>
        <begin position="17"/>
        <end position="24"/>
    </location>
    <ligand>
        <name>GTP</name>
        <dbReference type="ChEBI" id="CHEBI:37565"/>
    </ligand>
</feature>
<feature type="binding site" evidence="1">
    <location>
        <begin position="85"/>
        <end position="89"/>
    </location>
    <ligand>
        <name>GTP</name>
        <dbReference type="ChEBI" id="CHEBI:37565"/>
    </ligand>
</feature>
<feature type="binding site" evidence="1">
    <location>
        <begin position="139"/>
        <end position="142"/>
    </location>
    <ligand>
        <name>GTP</name>
        <dbReference type="ChEBI" id="CHEBI:37565"/>
    </ligand>
</feature>
<sequence length="514" mass="58446">MSIQEEIKKRRTFAIISHPDAGKTTITEQLLYFGGEIREAGTVKGKKSGTFAKSDWMDIEKQRGISVTSSVMQFDYAGKRVNILDTPGHEDFSEDTYRTLMAVDAAVMVVDSAKGIEAQTKKLFEVVKHRGIPVFTFINKLDRDGREPLELLEELEEVLGIASFPMNWPIGMGKAFEGLYDLHNNRLELYKGENRFADLEEGAKLFANNPFYEQVLDDIELLQEAGNEFSEEAILSGELTPVFFGSALTNFGVQTFLDTFLEFAPEPHGHKTKEGQMIDPLEKDFSGFVFKIQANMDPRHRDRIAFVRIVSGEFVKGMGVNLTRTGKGAKLSNVTQFMAESRENVQNAVAGDIIGVYDTGTYQVGDTLTVGKHKFEFEPLPTFTPELFMKVSPKNVMKQKSFHKGMEQLVQEGAVQLYRNYQTGEYMLGAVGQLQFEVFKHRMEGEYNAEVIMTPMGKKTVRWIKEEDLDQRMSSSRNILAKDRFDQPVFLFENDFALRWFADKYPDVQLEEKM</sequence>
<dbReference type="EMBL" id="AM946015">
    <property type="protein sequence ID" value="CAR42734.1"/>
    <property type="molecule type" value="Genomic_DNA"/>
</dbReference>
<dbReference type="RefSeq" id="WP_012658728.1">
    <property type="nucleotide sequence ID" value="NC_012004.1"/>
</dbReference>
<dbReference type="SMR" id="B9DUR6"/>
<dbReference type="STRING" id="218495.SUB1253"/>
<dbReference type="KEGG" id="sub:SUB1253"/>
<dbReference type="eggNOG" id="COG4108">
    <property type="taxonomic scope" value="Bacteria"/>
</dbReference>
<dbReference type="HOGENOM" id="CLU_002794_2_1_9"/>
<dbReference type="OrthoDB" id="9804431at2"/>
<dbReference type="Proteomes" id="UP000000449">
    <property type="component" value="Chromosome"/>
</dbReference>
<dbReference type="GO" id="GO:0005829">
    <property type="term" value="C:cytosol"/>
    <property type="evidence" value="ECO:0007669"/>
    <property type="project" value="TreeGrafter"/>
</dbReference>
<dbReference type="GO" id="GO:0005525">
    <property type="term" value="F:GTP binding"/>
    <property type="evidence" value="ECO:0007669"/>
    <property type="project" value="UniProtKB-UniRule"/>
</dbReference>
<dbReference type="GO" id="GO:0003924">
    <property type="term" value="F:GTPase activity"/>
    <property type="evidence" value="ECO:0007669"/>
    <property type="project" value="InterPro"/>
</dbReference>
<dbReference type="GO" id="GO:0016150">
    <property type="term" value="F:translation release factor activity, codon nonspecific"/>
    <property type="evidence" value="ECO:0007669"/>
    <property type="project" value="TreeGrafter"/>
</dbReference>
<dbReference type="GO" id="GO:0016149">
    <property type="term" value="F:translation release factor activity, codon specific"/>
    <property type="evidence" value="ECO:0007669"/>
    <property type="project" value="UniProtKB-UniRule"/>
</dbReference>
<dbReference type="GO" id="GO:0006449">
    <property type="term" value="P:regulation of translational termination"/>
    <property type="evidence" value="ECO:0007669"/>
    <property type="project" value="UniProtKB-UniRule"/>
</dbReference>
<dbReference type="CDD" id="cd04169">
    <property type="entry name" value="RF3"/>
    <property type="match status" value="1"/>
</dbReference>
<dbReference type="FunFam" id="2.40.30.10:FF:000040">
    <property type="entry name" value="Peptide chain release factor 3"/>
    <property type="match status" value="1"/>
</dbReference>
<dbReference type="FunFam" id="3.30.70.3280:FF:000001">
    <property type="entry name" value="Peptide chain release factor 3"/>
    <property type="match status" value="1"/>
</dbReference>
<dbReference type="FunFam" id="3.40.50.300:FF:000542">
    <property type="entry name" value="Peptide chain release factor 3"/>
    <property type="match status" value="1"/>
</dbReference>
<dbReference type="Gene3D" id="3.40.50.300">
    <property type="entry name" value="P-loop containing nucleotide triphosphate hydrolases"/>
    <property type="match status" value="1"/>
</dbReference>
<dbReference type="Gene3D" id="3.30.70.3280">
    <property type="entry name" value="Peptide chain release factor 3, domain III"/>
    <property type="match status" value="1"/>
</dbReference>
<dbReference type="Gene3D" id="2.40.30.10">
    <property type="entry name" value="Translation factors"/>
    <property type="match status" value="1"/>
</dbReference>
<dbReference type="HAMAP" id="MF_00072">
    <property type="entry name" value="Rel_fac_3"/>
    <property type="match status" value="1"/>
</dbReference>
<dbReference type="InterPro" id="IPR053905">
    <property type="entry name" value="EF-G-like_DII"/>
</dbReference>
<dbReference type="InterPro" id="IPR035647">
    <property type="entry name" value="EFG_III/V"/>
</dbReference>
<dbReference type="InterPro" id="IPR031157">
    <property type="entry name" value="G_TR_CS"/>
</dbReference>
<dbReference type="InterPro" id="IPR027417">
    <property type="entry name" value="P-loop_NTPase"/>
</dbReference>
<dbReference type="InterPro" id="IPR004548">
    <property type="entry name" value="PrfC"/>
</dbReference>
<dbReference type="InterPro" id="IPR032090">
    <property type="entry name" value="RF3_C"/>
</dbReference>
<dbReference type="InterPro" id="IPR038467">
    <property type="entry name" value="RF3_dom_3_sf"/>
</dbReference>
<dbReference type="InterPro" id="IPR041732">
    <property type="entry name" value="RF3_GTP-bd"/>
</dbReference>
<dbReference type="InterPro" id="IPR005225">
    <property type="entry name" value="Small_GTP-bd"/>
</dbReference>
<dbReference type="InterPro" id="IPR000795">
    <property type="entry name" value="T_Tr_GTP-bd_dom"/>
</dbReference>
<dbReference type="InterPro" id="IPR009000">
    <property type="entry name" value="Transl_B-barrel_sf"/>
</dbReference>
<dbReference type="NCBIfam" id="TIGR00503">
    <property type="entry name" value="prfC"/>
    <property type="match status" value="1"/>
</dbReference>
<dbReference type="NCBIfam" id="NF001964">
    <property type="entry name" value="PRK00741.1"/>
    <property type="match status" value="1"/>
</dbReference>
<dbReference type="NCBIfam" id="TIGR00231">
    <property type="entry name" value="small_GTP"/>
    <property type="match status" value="1"/>
</dbReference>
<dbReference type="PANTHER" id="PTHR43556">
    <property type="entry name" value="PEPTIDE CHAIN RELEASE FACTOR RF3"/>
    <property type="match status" value="1"/>
</dbReference>
<dbReference type="PANTHER" id="PTHR43556:SF2">
    <property type="entry name" value="PEPTIDE CHAIN RELEASE FACTOR RF3"/>
    <property type="match status" value="1"/>
</dbReference>
<dbReference type="Pfam" id="PF22042">
    <property type="entry name" value="EF-G_D2"/>
    <property type="match status" value="1"/>
</dbReference>
<dbReference type="Pfam" id="PF00009">
    <property type="entry name" value="GTP_EFTU"/>
    <property type="match status" value="1"/>
</dbReference>
<dbReference type="Pfam" id="PF16658">
    <property type="entry name" value="RF3_C"/>
    <property type="match status" value="1"/>
</dbReference>
<dbReference type="PRINTS" id="PR00315">
    <property type="entry name" value="ELONGATNFCT"/>
</dbReference>
<dbReference type="PRINTS" id="PR01037">
    <property type="entry name" value="TCRTETOQM"/>
</dbReference>
<dbReference type="SUPFAM" id="SSF54980">
    <property type="entry name" value="EF-G C-terminal domain-like"/>
    <property type="match status" value="1"/>
</dbReference>
<dbReference type="SUPFAM" id="SSF52540">
    <property type="entry name" value="P-loop containing nucleoside triphosphate hydrolases"/>
    <property type="match status" value="1"/>
</dbReference>
<dbReference type="SUPFAM" id="SSF50447">
    <property type="entry name" value="Translation proteins"/>
    <property type="match status" value="1"/>
</dbReference>
<dbReference type="PROSITE" id="PS00301">
    <property type="entry name" value="G_TR_1"/>
    <property type="match status" value="1"/>
</dbReference>
<dbReference type="PROSITE" id="PS51722">
    <property type="entry name" value="G_TR_2"/>
    <property type="match status" value="1"/>
</dbReference>
<comment type="function">
    <text evidence="1">Increases the formation of ribosomal termination complexes and stimulates activities of RF-1 and RF-2. It binds guanine nucleotides and has strong preference for UGA stop codons. It may interact directly with the ribosome. The stimulation of RF-1 and RF-2 is significantly reduced by GTP and GDP, but not by GMP.</text>
</comment>
<comment type="subcellular location">
    <subcellularLocation>
        <location evidence="1">Cytoplasm</location>
    </subcellularLocation>
</comment>
<comment type="similarity">
    <text evidence="1">Belongs to the TRAFAC class translation factor GTPase superfamily. Classic translation factor GTPase family. PrfC subfamily.</text>
</comment>
<name>RF3_STRU0</name>
<proteinExistence type="inferred from homology"/>
<evidence type="ECO:0000255" key="1">
    <source>
        <dbReference type="HAMAP-Rule" id="MF_00072"/>
    </source>
</evidence>
<reference key="1">
    <citation type="journal article" date="2009" name="BMC Genomics">
        <title>Evidence for niche adaptation in the genome of the bovine pathogen Streptococcus uberis.</title>
        <authorList>
            <person name="Ward P.N."/>
            <person name="Holden M.T.G."/>
            <person name="Leigh J.A."/>
            <person name="Lennard N."/>
            <person name="Bignell A."/>
            <person name="Barron A."/>
            <person name="Clark L."/>
            <person name="Quail M.A."/>
            <person name="Woodward J."/>
            <person name="Barrell B.G."/>
            <person name="Egan S.A."/>
            <person name="Field T.R."/>
            <person name="Maskell D."/>
            <person name="Kehoe M."/>
            <person name="Dowson C.G."/>
            <person name="Chanter N."/>
            <person name="Whatmore A.M."/>
            <person name="Bentley S.D."/>
            <person name="Parkhill J."/>
        </authorList>
    </citation>
    <scope>NUCLEOTIDE SEQUENCE [LARGE SCALE GENOMIC DNA]</scope>
    <source>
        <strain>ATCC BAA-854 / 0140J</strain>
    </source>
</reference>
<gene>
    <name evidence="1" type="primary">prfC</name>
    <name type="ordered locus">SUB1253</name>
</gene>
<keyword id="KW-0963">Cytoplasm</keyword>
<keyword id="KW-0342">GTP-binding</keyword>
<keyword id="KW-0547">Nucleotide-binding</keyword>
<keyword id="KW-0648">Protein biosynthesis</keyword>
<keyword id="KW-1185">Reference proteome</keyword>